<name>CP9C1_DROME</name>
<comment type="function">
    <text evidence="1">May be involved in the metabolism of insect hormones and in the breakdown of synthetic insecticides.</text>
</comment>
<comment type="cofactor">
    <cofactor evidence="1">
        <name>heme</name>
        <dbReference type="ChEBI" id="CHEBI:30413"/>
    </cofactor>
</comment>
<comment type="subcellular location">
    <subcellularLocation>
        <location evidence="2">Endoplasmic reticulum membrane</location>
        <topology evidence="2">Peripheral membrane protein</topology>
    </subcellularLocation>
    <subcellularLocation>
        <location evidence="2">Microsome membrane</location>
        <topology evidence="2">Peripheral membrane protein</topology>
    </subcellularLocation>
</comment>
<comment type="similarity">
    <text evidence="2">Belongs to the cytochrome P450 family.</text>
</comment>
<organism>
    <name type="scientific">Drosophila melanogaster</name>
    <name type="common">Fruit fly</name>
    <dbReference type="NCBI Taxonomy" id="7227"/>
    <lineage>
        <taxon>Eukaryota</taxon>
        <taxon>Metazoa</taxon>
        <taxon>Ecdysozoa</taxon>
        <taxon>Arthropoda</taxon>
        <taxon>Hexapoda</taxon>
        <taxon>Insecta</taxon>
        <taxon>Pterygota</taxon>
        <taxon>Neoptera</taxon>
        <taxon>Endopterygota</taxon>
        <taxon>Diptera</taxon>
        <taxon>Brachycera</taxon>
        <taxon>Muscomorpha</taxon>
        <taxon>Ephydroidea</taxon>
        <taxon>Drosophilidae</taxon>
        <taxon>Drosophila</taxon>
        <taxon>Sophophora</taxon>
    </lineage>
</organism>
<sequence length="522" mass="60538">MVFVELSIFVAFIGLLLYKWSVYTFGYFSKRGVAHEKPIPLLGNIPWSVLMGKESYIKHSIDLHLRLKQHKVYGVFNLRDPLYYLSDPELIRQVGIKNFDTFTNHRKGITEGFNDTSVISKSLLSLRDRRWKQMRSTLTPTFTSLKIRQMFELIHFCNVEAVDFVQRQLDAGTSELELKDFFTRYTNDVIATAAFGIQVNSFKDPNNEFFSIGQRISEFTFWGGLKVMLYILMPKLMKALRVPVMDMNNVDYFKKLVFGAMKYRKEQSIVRPDMIHLLMEAQRQFKAEQEGSAESAAQQDKAEFNDDDLLAQCLLFFSAGFETVATCLSFTSYELMMNPEVQEKLLAEILAVKEQLGEKPLDYDTLMGMKYLNCVVSESLRKWPPAFIVDRMCGSDFQLKDEEGEVVVNLREDDLVHINVGALHHDPDNFPEPEQFRPERFDEEHKHEIRQFTYLPFGVGQRSCIGNRLALMEVKSLIFQLVLRYHLKPTDRTPADMMSSISGFRLLPRELFWCKLESRGPA</sequence>
<keyword id="KW-0256">Endoplasmic reticulum</keyword>
<keyword id="KW-0349">Heme</keyword>
<keyword id="KW-0408">Iron</keyword>
<keyword id="KW-0472">Membrane</keyword>
<keyword id="KW-0479">Metal-binding</keyword>
<keyword id="KW-0492">Microsome</keyword>
<keyword id="KW-0503">Monooxygenase</keyword>
<keyword id="KW-0560">Oxidoreductase</keyword>
<keyword id="KW-1185">Reference proteome</keyword>
<reference key="1">
    <citation type="journal article" date="2000" name="Science">
        <title>The genome sequence of Drosophila melanogaster.</title>
        <authorList>
            <person name="Adams M.D."/>
            <person name="Celniker S.E."/>
            <person name="Holt R.A."/>
            <person name="Evans C.A."/>
            <person name="Gocayne J.D."/>
            <person name="Amanatides P.G."/>
            <person name="Scherer S.E."/>
            <person name="Li P.W."/>
            <person name="Hoskins R.A."/>
            <person name="Galle R.F."/>
            <person name="George R.A."/>
            <person name="Lewis S.E."/>
            <person name="Richards S."/>
            <person name="Ashburner M."/>
            <person name="Henderson S.N."/>
            <person name="Sutton G.G."/>
            <person name="Wortman J.R."/>
            <person name="Yandell M.D."/>
            <person name="Zhang Q."/>
            <person name="Chen L.X."/>
            <person name="Brandon R.C."/>
            <person name="Rogers Y.-H.C."/>
            <person name="Blazej R.G."/>
            <person name="Champe M."/>
            <person name="Pfeiffer B.D."/>
            <person name="Wan K.H."/>
            <person name="Doyle C."/>
            <person name="Baxter E.G."/>
            <person name="Helt G."/>
            <person name="Nelson C.R."/>
            <person name="Miklos G.L.G."/>
            <person name="Abril J.F."/>
            <person name="Agbayani A."/>
            <person name="An H.-J."/>
            <person name="Andrews-Pfannkoch C."/>
            <person name="Baldwin D."/>
            <person name="Ballew R.M."/>
            <person name="Basu A."/>
            <person name="Baxendale J."/>
            <person name="Bayraktaroglu L."/>
            <person name="Beasley E.M."/>
            <person name="Beeson K.Y."/>
            <person name="Benos P.V."/>
            <person name="Berman B.P."/>
            <person name="Bhandari D."/>
            <person name="Bolshakov S."/>
            <person name="Borkova D."/>
            <person name="Botchan M.R."/>
            <person name="Bouck J."/>
            <person name="Brokstein P."/>
            <person name="Brottier P."/>
            <person name="Burtis K.C."/>
            <person name="Busam D.A."/>
            <person name="Butler H."/>
            <person name="Cadieu E."/>
            <person name="Center A."/>
            <person name="Chandra I."/>
            <person name="Cherry J.M."/>
            <person name="Cawley S."/>
            <person name="Dahlke C."/>
            <person name="Davenport L.B."/>
            <person name="Davies P."/>
            <person name="de Pablos B."/>
            <person name="Delcher A."/>
            <person name="Deng Z."/>
            <person name="Mays A.D."/>
            <person name="Dew I."/>
            <person name="Dietz S.M."/>
            <person name="Dodson K."/>
            <person name="Doup L.E."/>
            <person name="Downes M."/>
            <person name="Dugan-Rocha S."/>
            <person name="Dunkov B.C."/>
            <person name="Dunn P."/>
            <person name="Durbin K.J."/>
            <person name="Evangelista C.C."/>
            <person name="Ferraz C."/>
            <person name="Ferriera S."/>
            <person name="Fleischmann W."/>
            <person name="Fosler C."/>
            <person name="Gabrielian A.E."/>
            <person name="Garg N.S."/>
            <person name="Gelbart W.M."/>
            <person name="Glasser K."/>
            <person name="Glodek A."/>
            <person name="Gong F."/>
            <person name="Gorrell J.H."/>
            <person name="Gu Z."/>
            <person name="Guan P."/>
            <person name="Harris M."/>
            <person name="Harris N.L."/>
            <person name="Harvey D.A."/>
            <person name="Heiman T.J."/>
            <person name="Hernandez J.R."/>
            <person name="Houck J."/>
            <person name="Hostin D."/>
            <person name="Houston K.A."/>
            <person name="Howland T.J."/>
            <person name="Wei M.-H."/>
            <person name="Ibegwam C."/>
            <person name="Jalali M."/>
            <person name="Kalush F."/>
            <person name="Karpen G.H."/>
            <person name="Ke Z."/>
            <person name="Kennison J.A."/>
            <person name="Ketchum K.A."/>
            <person name="Kimmel B.E."/>
            <person name="Kodira C.D."/>
            <person name="Kraft C.L."/>
            <person name="Kravitz S."/>
            <person name="Kulp D."/>
            <person name="Lai Z."/>
            <person name="Lasko P."/>
            <person name="Lei Y."/>
            <person name="Levitsky A.A."/>
            <person name="Li J.H."/>
            <person name="Li Z."/>
            <person name="Liang Y."/>
            <person name="Lin X."/>
            <person name="Liu X."/>
            <person name="Mattei B."/>
            <person name="McIntosh T.C."/>
            <person name="McLeod M.P."/>
            <person name="McPherson D."/>
            <person name="Merkulov G."/>
            <person name="Milshina N.V."/>
            <person name="Mobarry C."/>
            <person name="Morris J."/>
            <person name="Moshrefi A."/>
            <person name="Mount S.M."/>
            <person name="Moy M."/>
            <person name="Murphy B."/>
            <person name="Murphy L."/>
            <person name="Muzny D.M."/>
            <person name="Nelson D.L."/>
            <person name="Nelson D.R."/>
            <person name="Nelson K.A."/>
            <person name="Nixon K."/>
            <person name="Nusskern D.R."/>
            <person name="Pacleb J.M."/>
            <person name="Palazzolo M."/>
            <person name="Pittman G.S."/>
            <person name="Pan S."/>
            <person name="Pollard J."/>
            <person name="Puri V."/>
            <person name="Reese M.G."/>
            <person name="Reinert K."/>
            <person name="Remington K."/>
            <person name="Saunders R.D.C."/>
            <person name="Scheeler F."/>
            <person name="Shen H."/>
            <person name="Shue B.C."/>
            <person name="Siden-Kiamos I."/>
            <person name="Simpson M."/>
            <person name="Skupski M.P."/>
            <person name="Smith T.J."/>
            <person name="Spier E."/>
            <person name="Spradling A.C."/>
            <person name="Stapleton M."/>
            <person name="Strong R."/>
            <person name="Sun E."/>
            <person name="Svirskas R."/>
            <person name="Tector C."/>
            <person name="Turner R."/>
            <person name="Venter E."/>
            <person name="Wang A.H."/>
            <person name="Wang X."/>
            <person name="Wang Z.-Y."/>
            <person name="Wassarman D.A."/>
            <person name="Weinstock G.M."/>
            <person name="Weissenbach J."/>
            <person name="Williams S.M."/>
            <person name="Woodage T."/>
            <person name="Worley K.C."/>
            <person name="Wu D."/>
            <person name="Yang S."/>
            <person name="Yao Q.A."/>
            <person name="Ye J."/>
            <person name="Yeh R.-F."/>
            <person name="Zaveri J.S."/>
            <person name="Zhan M."/>
            <person name="Zhang G."/>
            <person name="Zhao Q."/>
            <person name="Zheng L."/>
            <person name="Zheng X.H."/>
            <person name="Zhong F.N."/>
            <person name="Zhong W."/>
            <person name="Zhou X."/>
            <person name="Zhu S.C."/>
            <person name="Zhu X."/>
            <person name="Smith H.O."/>
            <person name="Gibbs R.A."/>
            <person name="Myers E.W."/>
            <person name="Rubin G.M."/>
            <person name="Venter J.C."/>
        </authorList>
    </citation>
    <scope>NUCLEOTIDE SEQUENCE [LARGE SCALE GENOMIC DNA]</scope>
    <source>
        <strain>Berkeley</strain>
    </source>
</reference>
<reference key="2">
    <citation type="journal article" date="2002" name="Genome Biol.">
        <title>Annotation of the Drosophila melanogaster euchromatic genome: a systematic review.</title>
        <authorList>
            <person name="Misra S."/>
            <person name="Crosby M.A."/>
            <person name="Mungall C.J."/>
            <person name="Matthews B.B."/>
            <person name="Campbell K.S."/>
            <person name="Hradecky P."/>
            <person name="Huang Y."/>
            <person name="Kaminker J.S."/>
            <person name="Millburn G.H."/>
            <person name="Prochnik S.E."/>
            <person name="Smith C.D."/>
            <person name="Tupy J.L."/>
            <person name="Whitfield E.J."/>
            <person name="Bayraktaroglu L."/>
            <person name="Berman B.P."/>
            <person name="Bettencourt B.R."/>
            <person name="Celniker S.E."/>
            <person name="de Grey A.D.N.J."/>
            <person name="Drysdale R.A."/>
            <person name="Harris N.L."/>
            <person name="Richter J."/>
            <person name="Russo S."/>
            <person name="Schroeder A.J."/>
            <person name="Shu S.Q."/>
            <person name="Stapleton M."/>
            <person name="Yamada C."/>
            <person name="Ashburner M."/>
            <person name="Gelbart W.M."/>
            <person name="Rubin G.M."/>
            <person name="Lewis S.E."/>
        </authorList>
    </citation>
    <scope>GENOME REANNOTATION</scope>
    <source>
        <strain>Berkeley</strain>
    </source>
</reference>
<reference key="3">
    <citation type="journal article" date="2002" name="Genome Biol.">
        <title>A Drosophila full-length cDNA resource.</title>
        <authorList>
            <person name="Stapleton M."/>
            <person name="Carlson J.W."/>
            <person name="Brokstein P."/>
            <person name="Yu C."/>
            <person name="Champe M."/>
            <person name="George R.A."/>
            <person name="Guarin H."/>
            <person name="Kronmiller B."/>
            <person name="Pacleb J.M."/>
            <person name="Park S."/>
            <person name="Wan K.H."/>
            <person name="Rubin G.M."/>
            <person name="Celniker S.E."/>
        </authorList>
    </citation>
    <scope>NUCLEOTIDE SEQUENCE [LARGE SCALE MRNA]</scope>
    <source>
        <strain>Berkeley</strain>
        <tissue>Embryo</tissue>
    </source>
</reference>
<reference key="4">
    <citation type="journal article" date="1996" name="Mol. Gen. Genet.">
        <title>Cytochrome P450 gene clusters in Drosophila melanogaster.</title>
        <authorList>
            <person name="Dunkov B.C."/>
            <person name="Rodriguez-Arnaiz R."/>
            <person name="Pittendrigh B."/>
            <person name="ffrench-Constant R.H."/>
            <person name="Feyereisen R."/>
        </authorList>
    </citation>
    <scope>NUCLEOTIDE SEQUENCE OF 341-459</scope>
    <source>
        <strain>Haag-79</strain>
    </source>
</reference>
<protein>
    <recommendedName>
        <fullName>Cytochrome P450 9c1</fullName>
        <ecNumber>1.14.-.-</ecNumber>
    </recommendedName>
    <alternativeName>
        <fullName>CYPIXC1</fullName>
    </alternativeName>
</protein>
<evidence type="ECO:0000250" key="1"/>
<evidence type="ECO:0000305" key="2"/>
<dbReference type="EC" id="1.14.-.-"/>
<dbReference type="EMBL" id="AE013599">
    <property type="protein sequence ID" value="AAF47247.1"/>
    <property type="molecule type" value="Genomic_DNA"/>
</dbReference>
<dbReference type="EMBL" id="AY118661">
    <property type="protein sequence ID" value="AAM50030.1"/>
    <property type="molecule type" value="mRNA"/>
</dbReference>
<dbReference type="EMBL" id="U34326">
    <property type="protein sequence ID" value="AAA80660.1"/>
    <property type="molecule type" value="mRNA"/>
</dbReference>
<dbReference type="PIR" id="S70621">
    <property type="entry name" value="S70621"/>
</dbReference>
<dbReference type="RefSeq" id="NP_523850.1">
    <property type="nucleotide sequence ID" value="NM_079126.3"/>
</dbReference>
<dbReference type="SMR" id="Q9W130"/>
<dbReference type="BioGRID" id="63513">
    <property type="interactions" value="1"/>
</dbReference>
<dbReference type="FunCoup" id="Q9W130">
    <property type="interactions" value="31"/>
</dbReference>
<dbReference type="STRING" id="7227.FBpp0072228"/>
<dbReference type="PaxDb" id="7227-FBpp0072228"/>
<dbReference type="EnsemblMetazoa" id="FBtr0072321">
    <property type="protein sequence ID" value="FBpp0072228"/>
    <property type="gene ID" value="FBgn0015040"/>
</dbReference>
<dbReference type="GeneID" id="37941"/>
<dbReference type="KEGG" id="dme:Dmel_CG3616"/>
<dbReference type="AGR" id="FB:FBgn0015040"/>
<dbReference type="CTD" id="37941"/>
<dbReference type="FlyBase" id="FBgn0015040">
    <property type="gene designation" value="Cyp9c1"/>
</dbReference>
<dbReference type="VEuPathDB" id="VectorBase:FBgn0015040"/>
<dbReference type="eggNOG" id="KOG0158">
    <property type="taxonomic scope" value="Eukaryota"/>
</dbReference>
<dbReference type="GeneTree" id="ENSGT00940000165057"/>
<dbReference type="HOGENOM" id="CLU_001570_5_2_1"/>
<dbReference type="InParanoid" id="Q9W130"/>
<dbReference type="OMA" id="EHKHEIR"/>
<dbReference type="OrthoDB" id="2789670at2759"/>
<dbReference type="PhylomeDB" id="Q9W130"/>
<dbReference type="BioGRID-ORCS" id="37941">
    <property type="hits" value="0 hits in 3 CRISPR screens"/>
</dbReference>
<dbReference type="GenomeRNAi" id="37941"/>
<dbReference type="PRO" id="PR:Q9W130"/>
<dbReference type="Proteomes" id="UP000000803">
    <property type="component" value="Chromosome 2R"/>
</dbReference>
<dbReference type="Bgee" id="FBgn0015040">
    <property type="expression patterns" value="Expressed in thoracico-abdominal ganglion (Drosophila) and 23 other cell types or tissues"/>
</dbReference>
<dbReference type="GO" id="GO:0005789">
    <property type="term" value="C:endoplasmic reticulum membrane"/>
    <property type="evidence" value="ECO:0007669"/>
    <property type="project" value="UniProtKB-SubCell"/>
</dbReference>
<dbReference type="GO" id="GO:0020037">
    <property type="term" value="F:heme binding"/>
    <property type="evidence" value="ECO:0007669"/>
    <property type="project" value="InterPro"/>
</dbReference>
<dbReference type="GO" id="GO:0005506">
    <property type="term" value="F:iron ion binding"/>
    <property type="evidence" value="ECO:0007669"/>
    <property type="project" value="InterPro"/>
</dbReference>
<dbReference type="GO" id="GO:0004497">
    <property type="term" value="F:monooxygenase activity"/>
    <property type="evidence" value="ECO:0007669"/>
    <property type="project" value="UniProtKB-KW"/>
</dbReference>
<dbReference type="GO" id="GO:0016705">
    <property type="term" value="F:oxidoreductase activity, acting on paired donors, with incorporation or reduction of molecular oxygen"/>
    <property type="evidence" value="ECO:0007669"/>
    <property type="project" value="InterPro"/>
</dbReference>
<dbReference type="CDD" id="cd11056">
    <property type="entry name" value="CYP6-like"/>
    <property type="match status" value="1"/>
</dbReference>
<dbReference type="FunFam" id="1.10.630.10:FF:000042">
    <property type="entry name" value="Cytochrome P450"/>
    <property type="match status" value="1"/>
</dbReference>
<dbReference type="Gene3D" id="1.10.630.10">
    <property type="entry name" value="Cytochrome P450"/>
    <property type="match status" value="1"/>
</dbReference>
<dbReference type="InterPro" id="IPR001128">
    <property type="entry name" value="Cyt_P450"/>
</dbReference>
<dbReference type="InterPro" id="IPR017972">
    <property type="entry name" value="Cyt_P450_CS"/>
</dbReference>
<dbReference type="InterPro" id="IPR002401">
    <property type="entry name" value="Cyt_P450_E_grp-I"/>
</dbReference>
<dbReference type="InterPro" id="IPR036396">
    <property type="entry name" value="Cyt_P450_sf"/>
</dbReference>
<dbReference type="InterPro" id="IPR050476">
    <property type="entry name" value="Insect_CytP450_Detox"/>
</dbReference>
<dbReference type="PANTHER" id="PTHR24292:SF54">
    <property type="entry name" value="CYP9F3-RELATED"/>
    <property type="match status" value="1"/>
</dbReference>
<dbReference type="PANTHER" id="PTHR24292">
    <property type="entry name" value="CYTOCHROME P450"/>
    <property type="match status" value="1"/>
</dbReference>
<dbReference type="Pfam" id="PF00067">
    <property type="entry name" value="p450"/>
    <property type="match status" value="1"/>
</dbReference>
<dbReference type="PRINTS" id="PR00463">
    <property type="entry name" value="EP450I"/>
</dbReference>
<dbReference type="PRINTS" id="PR00385">
    <property type="entry name" value="P450"/>
</dbReference>
<dbReference type="SUPFAM" id="SSF48264">
    <property type="entry name" value="Cytochrome P450"/>
    <property type="match status" value="1"/>
</dbReference>
<dbReference type="PROSITE" id="PS00086">
    <property type="entry name" value="CYTOCHROME_P450"/>
    <property type="match status" value="1"/>
</dbReference>
<feature type="chain" id="PRO_0000051918" description="Cytochrome P450 9c1">
    <location>
        <begin position="1"/>
        <end position="522"/>
    </location>
</feature>
<feature type="binding site" description="axial binding residue" evidence="1">
    <location>
        <position position="464"/>
    </location>
    <ligand>
        <name>heme</name>
        <dbReference type="ChEBI" id="CHEBI:30413"/>
    </ligand>
    <ligandPart>
        <name>Fe</name>
        <dbReference type="ChEBI" id="CHEBI:18248"/>
    </ligandPart>
</feature>
<proteinExistence type="evidence at transcript level"/>
<accession>Q9W130</accession>
<accession>Q24124</accession>
<gene>
    <name type="primary">Cyp9c1</name>
    <name type="ORF">CG3616</name>
</gene>